<organism>
    <name type="scientific">Neurospora crassa (strain ATCC 24698 / 74-OR23-1A / CBS 708.71 / DSM 1257 / FGSC 987)</name>
    <dbReference type="NCBI Taxonomy" id="367110"/>
    <lineage>
        <taxon>Eukaryota</taxon>
        <taxon>Fungi</taxon>
        <taxon>Dikarya</taxon>
        <taxon>Ascomycota</taxon>
        <taxon>Pezizomycotina</taxon>
        <taxon>Sordariomycetes</taxon>
        <taxon>Sordariomycetidae</taxon>
        <taxon>Sordariales</taxon>
        <taxon>Sordariaceae</taxon>
        <taxon>Neurospora</taxon>
    </lineage>
</organism>
<keyword id="KW-1185">Reference proteome</keyword>
<keyword id="KW-0732">Signal</keyword>
<name>LCL2_NEUCR</name>
<proteinExistence type="inferred from homology"/>
<comment type="function">
    <text evidence="1">Probable component of the endoplasmic reticulum-associated degradation (ERAD) pathway.</text>
</comment>
<comment type="similarity">
    <text evidence="4">Belongs to the LCL2 family.</text>
</comment>
<reference key="1">
    <citation type="journal article" date="2003" name="Nucleic Acids Res.">
        <title>What's in the genome of a filamentous fungus? Analysis of the Neurospora genome sequence.</title>
        <authorList>
            <person name="Mannhaupt G."/>
            <person name="Montrone C."/>
            <person name="Haase D."/>
            <person name="Mewes H.-W."/>
            <person name="Aign V."/>
            <person name="Hoheisel J.D."/>
            <person name="Fartmann B."/>
            <person name="Nyakatura G."/>
            <person name="Kempken F."/>
            <person name="Maier J."/>
            <person name="Schulte U."/>
        </authorList>
    </citation>
    <scope>NUCLEOTIDE SEQUENCE [LARGE SCALE GENOMIC DNA]</scope>
    <source>
        <strain>ATCC 24698 / 74-OR23-1A / CBS 708.71 / DSM 1257 / FGSC 987</strain>
    </source>
</reference>
<reference key="2">
    <citation type="journal article" date="2003" name="Nature">
        <title>The genome sequence of the filamentous fungus Neurospora crassa.</title>
        <authorList>
            <person name="Galagan J.E."/>
            <person name="Calvo S.E."/>
            <person name="Borkovich K.A."/>
            <person name="Selker E.U."/>
            <person name="Read N.D."/>
            <person name="Jaffe D.B."/>
            <person name="FitzHugh W."/>
            <person name="Ma L.-J."/>
            <person name="Smirnov S."/>
            <person name="Purcell S."/>
            <person name="Rehman B."/>
            <person name="Elkins T."/>
            <person name="Engels R."/>
            <person name="Wang S."/>
            <person name="Nielsen C.B."/>
            <person name="Butler J."/>
            <person name="Endrizzi M."/>
            <person name="Qui D."/>
            <person name="Ianakiev P."/>
            <person name="Bell-Pedersen D."/>
            <person name="Nelson M.A."/>
            <person name="Werner-Washburne M."/>
            <person name="Selitrennikoff C.P."/>
            <person name="Kinsey J.A."/>
            <person name="Braun E.L."/>
            <person name="Zelter A."/>
            <person name="Schulte U."/>
            <person name="Kothe G.O."/>
            <person name="Jedd G."/>
            <person name="Mewes H.-W."/>
            <person name="Staben C."/>
            <person name="Marcotte E."/>
            <person name="Greenberg D."/>
            <person name="Roy A."/>
            <person name="Foley K."/>
            <person name="Naylor J."/>
            <person name="Stange-Thomann N."/>
            <person name="Barrett R."/>
            <person name="Gnerre S."/>
            <person name="Kamal M."/>
            <person name="Kamvysselis M."/>
            <person name="Mauceli E.W."/>
            <person name="Bielke C."/>
            <person name="Rudd S."/>
            <person name="Frishman D."/>
            <person name="Krystofova S."/>
            <person name="Rasmussen C."/>
            <person name="Metzenberg R.L."/>
            <person name="Perkins D.D."/>
            <person name="Kroken S."/>
            <person name="Cogoni C."/>
            <person name="Macino G."/>
            <person name="Catcheside D.E.A."/>
            <person name="Li W."/>
            <person name="Pratt R.J."/>
            <person name="Osmani S.A."/>
            <person name="DeSouza C.P.C."/>
            <person name="Glass N.L."/>
            <person name="Orbach M.J."/>
            <person name="Berglund J.A."/>
            <person name="Voelker R."/>
            <person name="Yarden O."/>
            <person name="Plamann M."/>
            <person name="Seiler S."/>
            <person name="Dunlap J.C."/>
            <person name="Radford A."/>
            <person name="Aramayo R."/>
            <person name="Natvig D.O."/>
            <person name="Alex L.A."/>
            <person name="Mannhaupt G."/>
            <person name="Ebbole D.J."/>
            <person name="Freitag M."/>
            <person name="Paulsen I."/>
            <person name="Sachs M.S."/>
            <person name="Lander E.S."/>
            <person name="Nusbaum C."/>
            <person name="Birren B.W."/>
        </authorList>
    </citation>
    <scope>NUCLEOTIDE SEQUENCE [LARGE SCALE GENOMIC DNA]</scope>
    <source>
        <strain>ATCC 24698 / 74-OR23-1A / CBS 708.71 / DSM 1257 / FGSC 987</strain>
    </source>
</reference>
<dbReference type="EMBL" id="AL670004">
    <property type="protein sequence ID" value="CAD21257.1"/>
    <property type="molecule type" value="Genomic_DNA"/>
</dbReference>
<dbReference type="EMBL" id="CM002240">
    <property type="protein sequence ID" value="EAA31754.1"/>
    <property type="molecule type" value="Genomic_DNA"/>
</dbReference>
<dbReference type="RefSeq" id="XP_960990.1">
    <property type="nucleotide sequence ID" value="XM_955897.2"/>
</dbReference>
<dbReference type="SMR" id="Q8X0Q1"/>
<dbReference type="STRING" id="367110.Q8X0Q1"/>
<dbReference type="PaxDb" id="5141-EFNCRP00000008807"/>
<dbReference type="EnsemblFungi" id="EAA31754">
    <property type="protein sequence ID" value="EAA31754"/>
    <property type="gene ID" value="NCU08860"/>
</dbReference>
<dbReference type="GeneID" id="3877128"/>
<dbReference type="KEGG" id="ncr:NCU08860"/>
<dbReference type="VEuPathDB" id="FungiDB:NCU08860"/>
<dbReference type="HOGENOM" id="CLU_142363_0_0_1"/>
<dbReference type="InParanoid" id="Q8X0Q1"/>
<dbReference type="OMA" id="DNYLCPD"/>
<dbReference type="OrthoDB" id="2234316at2759"/>
<dbReference type="Proteomes" id="UP000001805">
    <property type="component" value="Chromosome 2, Linkage Group V"/>
</dbReference>
<dbReference type="CDD" id="cd23996">
    <property type="entry name" value="LCL2-like"/>
    <property type="match status" value="1"/>
</dbReference>
<dbReference type="InterPro" id="IPR034543">
    <property type="entry name" value="LCL2"/>
</dbReference>
<dbReference type="PANTHER" id="PTHR38425">
    <property type="entry name" value="LONG CHRONOLOGICAL LIFESPAN PROTEIN 2"/>
    <property type="match status" value="1"/>
</dbReference>
<dbReference type="PANTHER" id="PTHR38425:SF1">
    <property type="entry name" value="LONG CHRONOLOGICAL LIFESPAN PROTEIN 2"/>
    <property type="match status" value="1"/>
</dbReference>
<feature type="signal peptide" evidence="2">
    <location>
        <begin position="1"/>
        <end position="20"/>
    </location>
</feature>
<feature type="chain" id="PRO_0000408615" description="Long chronological lifespan protein 2">
    <location>
        <begin position="21"/>
        <end position="132"/>
    </location>
</feature>
<feature type="region of interest" description="Disordered" evidence="3">
    <location>
        <begin position="32"/>
        <end position="59"/>
    </location>
</feature>
<feature type="compositionally biased region" description="Low complexity" evidence="3">
    <location>
        <begin position="35"/>
        <end position="45"/>
    </location>
</feature>
<gene>
    <name type="primary">lcl2</name>
    <name type="ORF">5E6.160</name>
    <name type="ORF">NCU08860</name>
</gene>
<sequence>MRTLYLVLLSLLTLASPIAAQFGSFFDQMFGGHGHQQTQQQQQHQGHGHQQHPNVPSDPSIYQANYQRAHCDKYLCPDTLACVHYPHHCPCPWPLHEDKAELAEGQRICVSKGGFKAGEAARKIELARKGML</sequence>
<accession>Q8X0Q1</accession>
<evidence type="ECO:0000250" key="1"/>
<evidence type="ECO:0000255" key="2"/>
<evidence type="ECO:0000256" key="3">
    <source>
        <dbReference type="SAM" id="MobiDB-lite"/>
    </source>
</evidence>
<evidence type="ECO:0000305" key="4"/>
<protein>
    <recommendedName>
        <fullName>Long chronological lifespan protein 2</fullName>
    </recommendedName>
</protein>